<proteinExistence type="inferred from homology"/>
<sequence>MLILISPAKTLDYQSPLTTTRYTLPELLDNSQQLIHEARKLTPPQISTLMRISDKLAGINAARFHDWQPDFTPANARQAILAFKGDVYTGLQAETFSEDDFDFAQQHLRMLSGLYGVLRPLDLMQPYRLEMGIRLENARGKDLYQFWGDIITNKLNEALAAQGDNVVINLAADEYFKSVKPKKLNAEIIKPVFLDEKNGKFKIISFYAKKARGLMSRFIIENRLTKPEQLTGFNSEGYFFDEDSSSNGELVFKRYEQR</sequence>
<organism>
    <name type="scientific">Shigella flexneri serotype 5b (strain 8401)</name>
    <dbReference type="NCBI Taxonomy" id="373384"/>
    <lineage>
        <taxon>Bacteria</taxon>
        <taxon>Pseudomonadati</taxon>
        <taxon>Pseudomonadota</taxon>
        <taxon>Gammaproteobacteria</taxon>
        <taxon>Enterobacterales</taxon>
        <taxon>Enterobacteriaceae</taxon>
        <taxon>Shigella</taxon>
    </lineage>
</organism>
<gene>
    <name evidence="1" type="primary">yaaA</name>
    <name type="ordered locus">SFV_0005</name>
</gene>
<evidence type="ECO:0000255" key="1">
    <source>
        <dbReference type="HAMAP-Rule" id="MF_00652"/>
    </source>
</evidence>
<protein>
    <recommendedName>
        <fullName evidence="1">UPF0246 protein YaaA</fullName>
    </recommendedName>
</protein>
<name>YAAA_SHIF8</name>
<feature type="chain" id="PRO_1000061639" description="UPF0246 protein YaaA">
    <location>
        <begin position="1"/>
        <end position="258"/>
    </location>
</feature>
<reference key="1">
    <citation type="journal article" date="2006" name="BMC Genomics">
        <title>Complete genome sequence of Shigella flexneri 5b and comparison with Shigella flexneri 2a.</title>
        <authorList>
            <person name="Nie H."/>
            <person name="Yang F."/>
            <person name="Zhang X."/>
            <person name="Yang J."/>
            <person name="Chen L."/>
            <person name="Wang J."/>
            <person name="Xiong Z."/>
            <person name="Peng J."/>
            <person name="Sun L."/>
            <person name="Dong J."/>
            <person name="Xue Y."/>
            <person name="Xu X."/>
            <person name="Chen S."/>
            <person name="Yao Z."/>
            <person name="Shen Y."/>
            <person name="Jin Q."/>
        </authorList>
    </citation>
    <scope>NUCLEOTIDE SEQUENCE [LARGE SCALE GENOMIC DNA]</scope>
    <source>
        <strain>8401</strain>
    </source>
</reference>
<comment type="similarity">
    <text evidence="1">Belongs to the UPF0246 family.</text>
</comment>
<dbReference type="EMBL" id="CP000266">
    <property type="protein sequence ID" value="ABF02294.1"/>
    <property type="molecule type" value="Genomic_DNA"/>
</dbReference>
<dbReference type="RefSeq" id="WP_000906195.1">
    <property type="nucleotide sequence ID" value="NC_008258.1"/>
</dbReference>
<dbReference type="SMR" id="Q0T8I2"/>
<dbReference type="KEGG" id="sfv:SFV_0005"/>
<dbReference type="HOGENOM" id="CLU_061989_0_0_6"/>
<dbReference type="Proteomes" id="UP000000659">
    <property type="component" value="Chromosome"/>
</dbReference>
<dbReference type="GO" id="GO:0005829">
    <property type="term" value="C:cytosol"/>
    <property type="evidence" value="ECO:0007669"/>
    <property type="project" value="TreeGrafter"/>
</dbReference>
<dbReference type="GO" id="GO:0033194">
    <property type="term" value="P:response to hydroperoxide"/>
    <property type="evidence" value="ECO:0007669"/>
    <property type="project" value="TreeGrafter"/>
</dbReference>
<dbReference type="HAMAP" id="MF_00652">
    <property type="entry name" value="UPF0246"/>
    <property type="match status" value="1"/>
</dbReference>
<dbReference type="InterPro" id="IPR005583">
    <property type="entry name" value="YaaA"/>
</dbReference>
<dbReference type="NCBIfam" id="NF002541">
    <property type="entry name" value="PRK02101.1-1"/>
    <property type="match status" value="1"/>
</dbReference>
<dbReference type="NCBIfam" id="NF002542">
    <property type="entry name" value="PRK02101.1-3"/>
    <property type="match status" value="1"/>
</dbReference>
<dbReference type="PANTHER" id="PTHR30283:SF4">
    <property type="entry name" value="PEROXIDE STRESS RESISTANCE PROTEIN YAAA"/>
    <property type="match status" value="1"/>
</dbReference>
<dbReference type="PANTHER" id="PTHR30283">
    <property type="entry name" value="PEROXIDE STRESS RESPONSE PROTEIN YAAA"/>
    <property type="match status" value="1"/>
</dbReference>
<dbReference type="Pfam" id="PF03883">
    <property type="entry name" value="H2O2_YaaD"/>
    <property type="match status" value="1"/>
</dbReference>
<accession>Q0T8I2</accession>